<name>SYA_THET8</name>
<keyword id="KW-0030">Aminoacyl-tRNA synthetase</keyword>
<keyword id="KW-0067">ATP-binding</keyword>
<keyword id="KW-0963">Cytoplasm</keyword>
<keyword id="KW-0436">Ligase</keyword>
<keyword id="KW-0479">Metal-binding</keyword>
<keyword id="KW-0547">Nucleotide-binding</keyword>
<keyword id="KW-0648">Protein biosynthesis</keyword>
<keyword id="KW-1185">Reference proteome</keyword>
<keyword id="KW-0694">RNA-binding</keyword>
<keyword id="KW-0820">tRNA-binding</keyword>
<keyword id="KW-0862">Zinc</keyword>
<gene>
    <name evidence="1" type="primary">alaS</name>
    <name type="ordered locus">TTHA1831</name>
</gene>
<accession>P74941</accession>
<accession>Q5SH99</accession>
<organism>
    <name type="scientific">Thermus thermophilus (strain ATCC 27634 / DSM 579 / HB8)</name>
    <dbReference type="NCBI Taxonomy" id="300852"/>
    <lineage>
        <taxon>Bacteria</taxon>
        <taxon>Thermotogati</taxon>
        <taxon>Deinococcota</taxon>
        <taxon>Deinococci</taxon>
        <taxon>Thermales</taxon>
        <taxon>Thermaceae</taxon>
        <taxon>Thermus</taxon>
    </lineage>
</organism>
<comment type="function">
    <text evidence="1">Catalyzes the attachment of alanine to tRNA(Ala) in a two-step reaction: alanine is first activated by ATP to form Ala-AMP and then transferred to the acceptor end of tRNA(Ala). Also edits incorrectly charged Ser-tRNA(Ala) and Gly-tRNA(Ala) via its editing domain.</text>
</comment>
<comment type="catalytic activity">
    <reaction evidence="1">
        <text>tRNA(Ala) + L-alanine + ATP = L-alanyl-tRNA(Ala) + AMP + diphosphate</text>
        <dbReference type="Rhea" id="RHEA:12540"/>
        <dbReference type="Rhea" id="RHEA-COMP:9657"/>
        <dbReference type="Rhea" id="RHEA-COMP:9923"/>
        <dbReference type="ChEBI" id="CHEBI:30616"/>
        <dbReference type="ChEBI" id="CHEBI:33019"/>
        <dbReference type="ChEBI" id="CHEBI:57972"/>
        <dbReference type="ChEBI" id="CHEBI:78442"/>
        <dbReference type="ChEBI" id="CHEBI:78497"/>
        <dbReference type="ChEBI" id="CHEBI:456215"/>
        <dbReference type="EC" id="6.1.1.7"/>
    </reaction>
</comment>
<comment type="cofactor">
    <cofactor evidence="1">
        <name>Zn(2+)</name>
        <dbReference type="ChEBI" id="CHEBI:29105"/>
    </cofactor>
    <text evidence="1">Binds 1 zinc ion per subunit.</text>
</comment>
<comment type="subcellular location">
    <subcellularLocation>
        <location evidence="1">Cytoplasm</location>
    </subcellularLocation>
</comment>
<comment type="domain">
    <text evidence="1">Consists of three domains; the N-terminal catalytic domain, the editing domain and the C-terminal C-Ala domain. The editing domain removes incorrectly charged amino acids, while the C-Ala domain, along with tRNA(Ala), serves as a bridge to cooperatively bring together the editing and aminoacylation centers thus stimulating deacylation of misacylated tRNAs.</text>
</comment>
<comment type="similarity">
    <text evidence="1">Belongs to the class-II aminoacyl-tRNA synthetase family.</text>
</comment>
<feature type="chain" id="PRO_0000075234" description="Alanine--tRNA ligase">
    <location>
        <begin position="1"/>
        <end position="882"/>
    </location>
</feature>
<feature type="region of interest" description="Disordered" evidence="2">
    <location>
        <begin position="853"/>
        <end position="882"/>
    </location>
</feature>
<feature type="compositionally biased region" description="Gly residues" evidence="2">
    <location>
        <begin position="854"/>
        <end position="868"/>
    </location>
</feature>
<feature type="binding site" evidence="1">
    <location>
        <position position="574"/>
    </location>
    <ligand>
        <name>Zn(2+)</name>
        <dbReference type="ChEBI" id="CHEBI:29105"/>
    </ligand>
</feature>
<feature type="binding site" evidence="1">
    <location>
        <position position="578"/>
    </location>
    <ligand>
        <name>Zn(2+)</name>
        <dbReference type="ChEBI" id="CHEBI:29105"/>
    </ligand>
</feature>
<feature type="binding site" evidence="1">
    <location>
        <position position="682"/>
    </location>
    <ligand>
        <name>Zn(2+)</name>
        <dbReference type="ChEBI" id="CHEBI:29105"/>
    </ligand>
</feature>
<feature type="binding site" evidence="1">
    <location>
        <position position="686"/>
    </location>
    <ligand>
        <name>Zn(2+)</name>
        <dbReference type="ChEBI" id="CHEBI:29105"/>
    </ligand>
</feature>
<feature type="sequence conflict" description="In Ref. 1; CAA69650." evidence="3" ref="1">
    <original>I</original>
    <variation>T</variation>
    <location>
        <position position="179"/>
    </location>
</feature>
<feature type="sequence conflict" description="In Ref. 1; CAA69650." evidence="3" ref="1">
    <original>G</original>
    <variation>A</variation>
    <location>
        <position position="218"/>
    </location>
</feature>
<evidence type="ECO:0000255" key="1">
    <source>
        <dbReference type="HAMAP-Rule" id="MF_00036"/>
    </source>
</evidence>
<evidence type="ECO:0000256" key="2">
    <source>
        <dbReference type="SAM" id="MobiDB-lite"/>
    </source>
</evidence>
<evidence type="ECO:0000305" key="3"/>
<dbReference type="EC" id="6.1.1.7" evidence="1"/>
<dbReference type="EMBL" id="Y08363">
    <property type="protein sequence ID" value="CAA69650.1"/>
    <property type="molecule type" value="Genomic_DNA"/>
</dbReference>
<dbReference type="EMBL" id="AP008226">
    <property type="protein sequence ID" value="BAD71654.1"/>
    <property type="molecule type" value="Genomic_DNA"/>
</dbReference>
<dbReference type="RefSeq" id="WP_011228945.1">
    <property type="nucleotide sequence ID" value="NC_006461.1"/>
</dbReference>
<dbReference type="RefSeq" id="YP_145097.1">
    <property type="nucleotide sequence ID" value="NC_006461.1"/>
</dbReference>
<dbReference type="SMR" id="P74941"/>
<dbReference type="EnsemblBacteria" id="BAD71654">
    <property type="protein sequence ID" value="BAD71654"/>
    <property type="gene ID" value="BAD71654"/>
</dbReference>
<dbReference type="GeneID" id="3169868"/>
<dbReference type="KEGG" id="ttj:TTHA1831"/>
<dbReference type="PATRIC" id="fig|300852.9.peg.1802"/>
<dbReference type="eggNOG" id="COG0013">
    <property type="taxonomic scope" value="Bacteria"/>
</dbReference>
<dbReference type="HOGENOM" id="CLU_004485_1_1_0"/>
<dbReference type="PhylomeDB" id="P74941"/>
<dbReference type="BRENDA" id="6.1.1.7">
    <property type="organism ID" value="2305"/>
</dbReference>
<dbReference type="Proteomes" id="UP000000532">
    <property type="component" value="Chromosome"/>
</dbReference>
<dbReference type="GO" id="GO:0005829">
    <property type="term" value="C:cytosol"/>
    <property type="evidence" value="ECO:0007669"/>
    <property type="project" value="TreeGrafter"/>
</dbReference>
<dbReference type="GO" id="GO:0004813">
    <property type="term" value="F:alanine-tRNA ligase activity"/>
    <property type="evidence" value="ECO:0007669"/>
    <property type="project" value="UniProtKB-UniRule"/>
</dbReference>
<dbReference type="GO" id="GO:0002161">
    <property type="term" value="F:aminoacyl-tRNA deacylase activity"/>
    <property type="evidence" value="ECO:0007669"/>
    <property type="project" value="TreeGrafter"/>
</dbReference>
<dbReference type="GO" id="GO:0005524">
    <property type="term" value="F:ATP binding"/>
    <property type="evidence" value="ECO:0007669"/>
    <property type="project" value="UniProtKB-UniRule"/>
</dbReference>
<dbReference type="GO" id="GO:0000049">
    <property type="term" value="F:tRNA binding"/>
    <property type="evidence" value="ECO:0007669"/>
    <property type="project" value="UniProtKB-KW"/>
</dbReference>
<dbReference type="GO" id="GO:0008270">
    <property type="term" value="F:zinc ion binding"/>
    <property type="evidence" value="ECO:0007669"/>
    <property type="project" value="UniProtKB-UniRule"/>
</dbReference>
<dbReference type="GO" id="GO:0006419">
    <property type="term" value="P:alanyl-tRNA aminoacylation"/>
    <property type="evidence" value="ECO:0007669"/>
    <property type="project" value="UniProtKB-UniRule"/>
</dbReference>
<dbReference type="CDD" id="cd00673">
    <property type="entry name" value="AlaRS_core"/>
    <property type="match status" value="1"/>
</dbReference>
<dbReference type="FunFam" id="2.40.30.130:FF:000001">
    <property type="entry name" value="Alanine--tRNA ligase"/>
    <property type="match status" value="1"/>
</dbReference>
<dbReference type="FunFam" id="3.10.310.40:FF:000001">
    <property type="entry name" value="Alanine--tRNA ligase"/>
    <property type="match status" value="1"/>
</dbReference>
<dbReference type="FunFam" id="3.30.54.20:FF:000001">
    <property type="entry name" value="Alanine--tRNA ligase"/>
    <property type="match status" value="1"/>
</dbReference>
<dbReference type="FunFam" id="3.30.930.10:FF:000004">
    <property type="entry name" value="Alanine--tRNA ligase"/>
    <property type="match status" value="1"/>
</dbReference>
<dbReference type="FunFam" id="3.30.980.10:FF:000004">
    <property type="entry name" value="Alanine--tRNA ligase, cytoplasmic"/>
    <property type="match status" value="1"/>
</dbReference>
<dbReference type="Gene3D" id="2.40.30.130">
    <property type="match status" value="1"/>
</dbReference>
<dbReference type="Gene3D" id="3.10.310.40">
    <property type="match status" value="1"/>
</dbReference>
<dbReference type="Gene3D" id="3.30.54.20">
    <property type="match status" value="1"/>
</dbReference>
<dbReference type="Gene3D" id="6.10.250.550">
    <property type="match status" value="1"/>
</dbReference>
<dbReference type="Gene3D" id="3.30.930.10">
    <property type="entry name" value="Bira Bifunctional Protein, Domain 2"/>
    <property type="match status" value="1"/>
</dbReference>
<dbReference type="Gene3D" id="3.30.980.10">
    <property type="entry name" value="Threonyl-trna Synthetase, Chain A, domain 2"/>
    <property type="match status" value="1"/>
</dbReference>
<dbReference type="HAMAP" id="MF_00036_B">
    <property type="entry name" value="Ala_tRNA_synth_B"/>
    <property type="match status" value="1"/>
</dbReference>
<dbReference type="InterPro" id="IPR045864">
    <property type="entry name" value="aa-tRNA-synth_II/BPL/LPL"/>
</dbReference>
<dbReference type="InterPro" id="IPR002318">
    <property type="entry name" value="Ala-tRNA-lgiase_IIc"/>
</dbReference>
<dbReference type="InterPro" id="IPR018162">
    <property type="entry name" value="Ala-tRNA-ligase_IIc_anticod-bd"/>
</dbReference>
<dbReference type="InterPro" id="IPR018165">
    <property type="entry name" value="Ala-tRNA-synth_IIc_core"/>
</dbReference>
<dbReference type="InterPro" id="IPR018164">
    <property type="entry name" value="Ala-tRNA-synth_IIc_N"/>
</dbReference>
<dbReference type="InterPro" id="IPR050058">
    <property type="entry name" value="Ala-tRNA_ligase"/>
</dbReference>
<dbReference type="InterPro" id="IPR023033">
    <property type="entry name" value="Ala_tRNA_ligase_euk/bac"/>
</dbReference>
<dbReference type="InterPro" id="IPR003156">
    <property type="entry name" value="DHHA1_dom"/>
</dbReference>
<dbReference type="InterPro" id="IPR018163">
    <property type="entry name" value="Thr/Ala-tRNA-synth_IIc_edit"/>
</dbReference>
<dbReference type="InterPro" id="IPR009000">
    <property type="entry name" value="Transl_B-barrel_sf"/>
</dbReference>
<dbReference type="InterPro" id="IPR012947">
    <property type="entry name" value="tRNA_SAD"/>
</dbReference>
<dbReference type="NCBIfam" id="TIGR00344">
    <property type="entry name" value="alaS"/>
    <property type="match status" value="1"/>
</dbReference>
<dbReference type="PANTHER" id="PTHR11777:SF9">
    <property type="entry name" value="ALANINE--TRNA LIGASE, CYTOPLASMIC"/>
    <property type="match status" value="1"/>
</dbReference>
<dbReference type="PANTHER" id="PTHR11777">
    <property type="entry name" value="ALANYL-TRNA SYNTHETASE"/>
    <property type="match status" value="1"/>
</dbReference>
<dbReference type="Pfam" id="PF02272">
    <property type="entry name" value="DHHA1"/>
    <property type="match status" value="1"/>
</dbReference>
<dbReference type="Pfam" id="PF01411">
    <property type="entry name" value="tRNA-synt_2c"/>
    <property type="match status" value="1"/>
</dbReference>
<dbReference type="Pfam" id="PF07973">
    <property type="entry name" value="tRNA_SAD"/>
    <property type="match status" value="1"/>
</dbReference>
<dbReference type="PRINTS" id="PR00980">
    <property type="entry name" value="TRNASYNTHALA"/>
</dbReference>
<dbReference type="SMART" id="SM00863">
    <property type="entry name" value="tRNA_SAD"/>
    <property type="match status" value="1"/>
</dbReference>
<dbReference type="SUPFAM" id="SSF55681">
    <property type="entry name" value="Class II aaRS and biotin synthetases"/>
    <property type="match status" value="1"/>
</dbReference>
<dbReference type="SUPFAM" id="SSF101353">
    <property type="entry name" value="Putative anticodon-binding domain of alanyl-tRNA synthetase (AlaRS)"/>
    <property type="match status" value="1"/>
</dbReference>
<dbReference type="SUPFAM" id="SSF55186">
    <property type="entry name" value="ThrRS/AlaRS common domain"/>
    <property type="match status" value="1"/>
</dbReference>
<dbReference type="SUPFAM" id="SSF50447">
    <property type="entry name" value="Translation proteins"/>
    <property type="match status" value="1"/>
</dbReference>
<dbReference type="PROSITE" id="PS50860">
    <property type="entry name" value="AA_TRNA_LIGASE_II_ALA"/>
    <property type="match status" value="1"/>
</dbReference>
<reference key="1">
    <citation type="journal article" date="1997" name="Nucleic Acids Res.">
        <title>A biologically active 53 kDa fragment of overproduced alanyl-tRNA synthetase from Thermus thermophilus HB8 specifically interacts with tRNA ala acceptor helix.</title>
        <authorList>
            <person name="Lechler A."/>
            <person name="Martin A."/>
            <person name="Zuleeg T."/>
            <person name="Limmer S."/>
            <person name="Kreutzer R."/>
        </authorList>
    </citation>
    <scope>NUCLEOTIDE SEQUENCE [GENOMIC DNA]</scope>
</reference>
<reference key="2">
    <citation type="submission" date="2004-11" db="EMBL/GenBank/DDBJ databases">
        <title>Complete genome sequence of Thermus thermophilus HB8.</title>
        <authorList>
            <person name="Masui R."/>
            <person name="Kurokawa K."/>
            <person name="Nakagawa N."/>
            <person name="Tokunaga F."/>
            <person name="Koyama Y."/>
            <person name="Shibata T."/>
            <person name="Oshima T."/>
            <person name="Yokoyama S."/>
            <person name="Yasunaga T."/>
            <person name="Kuramitsu S."/>
        </authorList>
    </citation>
    <scope>NUCLEOTIDE SEQUENCE [LARGE SCALE GENOMIC DNA]</scope>
    <source>
        <strain>ATCC 27634 / DSM 579 / HB8</strain>
    </source>
</reference>
<proteinExistence type="inferred from homology"/>
<sequence>MRTAEIREKFLSFFEGKGHLRLPSFSLIPEDDPSLLFTSAGMAPLKPYFLGAKPIFGGREWRRVTTCQECLRVGDIENVGRTSRHNTYFEMLGNFSFGDYFKKEAILWAWEFLTEHLKLDPGRLWVTVFEDDDEAYEIWRDLVGVPEERIGRFGEDENYWPGGAITHGPNGPSGPCSEIFYDRGPAYGTPDETGPNTGSGDRFVEIWNLVFTQYDRQGPIPGPGILKPLPQKNIDTGMGLYRVAAILQDVEDFYRTDTFFPIIQEVARMSGRPYEGKTSVSHRVIADHVRAVVAALSDGATFSNTGRGYVIRRLLRRALRHGYLLGLSDPFLHRLAPLVAELLGDFYPEMRENLPAVEKQIRLEEERFLETLEGGLKRLDALLSGLKPGEVLPGKEAFRLYDTYGFPLDLTVEIAAERGYGVDTEGFQKAMEEQQSRSRAAMAFEREIFKKGAQVLEELYAERGATEFLGYNALEAEAEVLALLAGDQSLLEAGPGTEVQVVLDKTPFYAEGGGQIGDFGLLEWPGGRARVETTRKTERGIFLHKARVEEGVLRVGERVRAVVDPRRRDTERNHTATHLLHAALRAVLGPHVRQAGSLVAPDRLRFDFTHPEPLKPEELERVELLVNRWIMADFPVTWRYMPLEEARKEGAMALFGEKYGEVVRVVRVEGSPLEGLESKELCGGCHVRRTGEIGAFLIRSEEAVSAGVRRIEAVTGEEAIRFARGSLNRLKALAERLEVGEAALEERLEKLLAELKEKEREVESLKARLVQAALGGGGGASLEEKGGLRWTVAELPGLDAKALRQAADDLVARGADVALVLSGGQAVLKLSPKAQGMGLEAGALFRALAEKAGGRGGGKGALAQGGGLDPRKAREALPGLLP</sequence>
<protein>
    <recommendedName>
        <fullName evidence="1">Alanine--tRNA ligase</fullName>
        <ecNumber evidence="1">6.1.1.7</ecNumber>
    </recommendedName>
    <alternativeName>
        <fullName evidence="1">Alanyl-tRNA synthetase</fullName>
        <shortName evidence="1">AlaRS</shortName>
    </alternativeName>
</protein>